<feature type="chain" id="PRO_0000349457" description="Actin cytoskeleton-regulatory complex protein end3">
    <location>
        <begin position="1"/>
        <end position="375"/>
    </location>
</feature>
<feature type="domain" description="EH 1" evidence="3">
    <location>
        <begin position="5"/>
        <end position="95"/>
    </location>
</feature>
<feature type="domain" description="EF-hand 1" evidence="4">
    <location>
        <begin position="37"/>
        <end position="72"/>
    </location>
</feature>
<feature type="domain" description="EH 2" evidence="3">
    <location>
        <begin position="139"/>
        <end position="227"/>
    </location>
</feature>
<feature type="domain" description="EF-hand 2" evidence="4">
    <location>
        <begin position="171"/>
        <end position="206"/>
    </location>
</feature>
<feature type="region of interest" description="Disordered" evidence="5">
    <location>
        <begin position="244"/>
        <end position="264"/>
    </location>
</feature>
<feature type="coiled-coil region" evidence="2">
    <location>
        <begin position="272"/>
        <end position="375"/>
    </location>
</feature>
<keyword id="KW-0009">Actin-binding</keyword>
<keyword id="KW-1003">Cell membrane</keyword>
<keyword id="KW-0175">Coiled coil</keyword>
<keyword id="KW-0963">Cytoplasm</keyword>
<keyword id="KW-0206">Cytoskeleton</keyword>
<keyword id="KW-0254">Endocytosis</keyword>
<keyword id="KW-0967">Endosome</keyword>
<keyword id="KW-0472">Membrane</keyword>
<keyword id="KW-1185">Reference proteome</keyword>
<keyword id="KW-0677">Repeat</keyword>
<sequence>MDPQEKNKYWEIFRGLNPENGYLSGSKAAGVLRSSKLSSDKLEKIWDLADIDDDGMFDFDEFAIAMKITFDLINGVYKTVPDRVPEALVSTSKKHLVAARDALRGNDDIALLHKVPSLDTDPEDAVLKDGFDWYISPSDKIRYSDIYSLHCNKHGEVSFNGLAPVFTPFGVPNSQIQKAWKLVNPQGTETIQKDQCLVFLHILTQRSNGFRIPNDVPYSLKASFKRGNIDYNLDSYNSTNNYYSSPTMAPSTGGAKPKSDLDAPRDVRDSDWELISLRNELSKLDEKILSLQRETDDVNIAQNKSKLIQRDLQKVLDYKLGILQSLKNDGPNGPSASAIDNDLKMLEQQLNVLGRHLEGRKSQVAKLEERLRSLS</sequence>
<reference key="1">
    <citation type="journal article" date="2002" name="Nature">
        <title>The genome sequence of Schizosaccharomyces pombe.</title>
        <authorList>
            <person name="Wood V."/>
            <person name="Gwilliam R."/>
            <person name="Rajandream M.A."/>
            <person name="Lyne M.H."/>
            <person name="Lyne R."/>
            <person name="Stewart A."/>
            <person name="Sgouros J.G."/>
            <person name="Peat N."/>
            <person name="Hayles J."/>
            <person name="Baker S.G."/>
            <person name="Basham D."/>
            <person name="Bowman S."/>
            <person name="Brooks K."/>
            <person name="Brown D."/>
            <person name="Brown S."/>
            <person name="Chillingworth T."/>
            <person name="Churcher C.M."/>
            <person name="Collins M."/>
            <person name="Connor R."/>
            <person name="Cronin A."/>
            <person name="Davis P."/>
            <person name="Feltwell T."/>
            <person name="Fraser A."/>
            <person name="Gentles S."/>
            <person name="Goble A."/>
            <person name="Hamlin N."/>
            <person name="Harris D.E."/>
            <person name="Hidalgo J."/>
            <person name="Hodgson G."/>
            <person name="Holroyd S."/>
            <person name="Hornsby T."/>
            <person name="Howarth S."/>
            <person name="Huckle E.J."/>
            <person name="Hunt S."/>
            <person name="Jagels K."/>
            <person name="James K.D."/>
            <person name="Jones L."/>
            <person name="Jones M."/>
            <person name="Leather S."/>
            <person name="McDonald S."/>
            <person name="McLean J."/>
            <person name="Mooney P."/>
            <person name="Moule S."/>
            <person name="Mungall K.L."/>
            <person name="Murphy L.D."/>
            <person name="Niblett D."/>
            <person name="Odell C."/>
            <person name="Oliver K."/>
            <person name="O'Neil S."/>
            <person name="Pearson D."/>
            <person name="Quail M.A."/>
            <person name="Rabbinowitsch E."/>
            <person name="Rutherford K.M."/>
            <person name="Rutter S."/>
            <person name="Saunders D."/>
            <person name="Seeger K."/>
            <person name="Sharp S."/>
            <person name="Skelton J."/>
            <person name="Simmonds M.N."/>
            <person name="Squares R."/>
            <person name="Squares S."/>
            <person name="Stevens K."/>
            <person name="Taylor K."/>
            <person name="Taylor R.G."/>
            <person name="Tivey A."/>
            <person name="Walsh S.V."/>
            <person name="Warren T."/>
            <person name="Whitehead S."/>
            <person name="Woodward J.R."/>
            <person name="Volckaert G."/>
            <person name="Aert R."/>
            <person name="Robben J."/>
            <person name="Grymonprez B."/>
            <person name="Weltjens I."/>
            <person name="Vanstreels E."/>
            <person name="Rieger M."/>
            <person name="Schaefer M."/>
            <person name="Mueller-Auer S."/>
            <person name="Gabel C."/>
            <person name="Fuchs M."/>
            <person name="Duesterhoeft A."/>
            <person name="Fritzc C."/>
            <person name="Holzer E."/>
            <person name="Moestl D."/>
            <person name="Hilbert H."/>
            <person name="Borzym K."/>
            <person name="Langer I."/>
            <person name="Beck A."/>
            <person name="Lehrach H."/>
            <person name="Reinhardt R."/>
            <person name="Pohl T.M."/>
            <person name="Eger P."/>
            <person name="Zimmermann W."/>
            <person name="Wedler H."/>
            <person name="Wambutt R."/>
            <person name="Purnelle B."/>
            <person name="Goffeau A."/>
            <person name="Cadieu E."/>
            <person name="Dreano S."/>
            <person name="Gloux S."/>
            <person name="Lelaure V."/>
            <person name="Mottier S."/>
            <person name="Galibert F."/>
            <person name="Aves S.J."/>
            <person name="Xiang Z."/>
            <person name="Hunt C."/>
            <person name="Moore K."/>
            <person name="Hurst S.M."/>
            <person name="Lucas M."/>
            <person name="Rochet M."/>
            <person name="Gaillardin C."/>
            <person name="Tallada V.A."/>
            <person name="Garzon A."/>
            <person name="Thode G."/>
            <person name="Daga R.R."/>
            <person name="Cruzado L."/>
            <person name="Jimenez J."/>
            <person name="Sanchez M."/>
            <person name="del Rey F."/>
            <person name="Benito J."/>
            <person name="Dominguez A."/>
            <person name="Revuelta J.L."/>
            <person name="Moreno S."/>
            <person name="Armstrong J."/>
            <person name="Forsburg S.L."/>
            <person name="Cerutti L."/>
            <person name="Lowe T."/>
            <person name="McCombie W.R."/>
            <person name="Paulsen I."/>
            <person name="Potashkin J."/>
            <person name="Shpakovski G.V."/>
            <person name="Ussery D."/>
            <person name="Barrell B.G."/>
            <person name="Nurse P."/>
        </authorList>
    </citation>
    <scope>NUCLEOTIDE SEQUENCE [LARGE SCALE GENOMIC DNA]</scope>
    <source>
        <strain>972 / ATCC 24843</strain>
    </source>
</reference>
<gene>
    <name type="primary">end3</name>
    <name type="ORF">SPBC11G11.02c</name>
</gene>
<dbReference type="EMBL" id="CU329671">
    <property type="protein sequence ID" value="CAB59804.1"/>
    <property type="molecule type" value="Genomic_DNA"/>
</dbReference>
<dbReference type="PIR" id="T39329">
    <property type="entry name" value="T39329"/>
</dbReference>
<dbReference type="RefSeq" id="NP_595720.1">
    <property type="nucleotide sequence ID" value="NM_001021618.2"/>
</dbReference>
<dbReference type="BioGRID" id="276448">
    <property type="interactions" value="2"/>
</dbReference>
<dbReference type="FunCoup" id="Q9USZ7">
    <property type="interactions" value="30"/>
</dbReference>
<dbReference type="STRING" id="284812.Q9USZ7"/>
<dbReference type="iPTMnet" id="Q9USZ7"/>
<dbReference type="PaxDb" id="4896-SPBC11G11.02c.1"/>
<dbReference type="EnsemblFungi" id="SPBC11G11.02c.1">
    <property type="protein sequence ID" value="SPBC11G11.02c.1:pep"/>
    <property type="gene ID" value="SPBC11G11.02c"/>
</dbReference>
<dbReference type="GeneID" id="2539902"/>
<dbReference type="KEGG" id="spo:2539902"/>
<dbReference type="PomBase" id="SPBC11G11.02c">
    <property type="gene designation" value="end3"/>
</dbReference>
<dbReference type="VEuPathDB" id="FungiDB:SPBC11G11.02c"/>
<dbReference type="eggNOG" id="KOG0998">
    <property type="taxonomic scope" value="Eukaryota"/>
</dbReference>
<dbReference type="HOGENOM" id="CLU_040829_0_0_1"/>
<dbReference type="InParanoid" id="Q9USZ7"/>
<dbReference type="OMA" id="HCLRQRN"/>
<dbReference type="PhylomeDB" id="Q9USZ7"/>
<dbReference type="Reactome" id="R-SPO-416482">
    <property type="pathway name" value="G alpha (12/13) signalling events"/>
</dbReference>
<dbReference type="Reactome" id="R-SPO-8856828">
    <property type="pathway name" value="Clathrin-mediated endocytosis"/>
</dbReference>
<dbReference type="Reactome" id="R-SPO-9013148">
    <property type="pathway name" value="CDC42 GTPase cycle"/>
</dbReference>
<dbReference type="Reactome" id="R-SPO-9013406">
    <property type="pathway name" value="RHOQ GTPase cycle"/>
</dbReference>
<dbReference type="Reactome" id="R-SPO-9013420">
    <property type="pathway name" value="RHOU GTPase cycle"/>
</dbReference>
<dbReference type="PRO" id="PR:Q9USZ7"/>
<dbReference type="Proteomes" id="UP000002485">
    <property type="component" value="Chromosome II"/>
</dbReference>
<dbReference type="GO" id="GO:0030479">
    <property type="term" value="C:actin cortical patch"/>
    <property type="evidence" value="ECO:0000266"/>
    <property type="project" value="PomBase"/>
</dbReference>
<dbReference type="GO" id="GO:0005737">
    <property type="term" value="C:cytoplasm"/>
    <property type="evidence" value="ECO:0000318"/>
    <property type="project" value="GO_Central"/>
</dbReference>
<dbReference type="GO" id="GO:0010008">
    <property type="term" value="C:endosome membrane"/>
    <property type="evidence" value="ECO:0007669"/>
    <property type="project" value="UniProtKB-SubCell"/>
</dbReference>
<dbReference type="GO" id="GO:0005886">
    <property type="term" value="C:plasma membrane"/>
    <property type="evidence" value="ECO:0000318"/>
    <property type="project" value="GO_Central"/>
</dbReference>
<dbReference type="GO" id="GO:0003779">
    <property type="term" value="F:actin binding"/>
    <property type="evidence" value="ECO:0007669"/>
    <property type="project" value="UniProtKB-KW"/>
</dbReference>
<dbReference type="GO" id="GO:0005509">
    <property type="term" value="F:calcium ion binding"/>
    <property type="evidence" value="ECO:0000255"/>
    <property type="project" value="PomBase"/>
</dbReference>
<dbReference type="GO" id="GO:0030036">
    <property type="term" value="P:actin cytoskeleton organization"/>
    <property type="evidence" value="ECO:0000266"/>
    <property type="project" value="PomBase"/>
</dbReference>
<dbReference type="GO" id="GO:0007015">
    <property type="term" value="P:actin filament organization"/>
    <property type="evidence" value="ECO:0007669"/>
    <property type="project" value="InterPro"/>
</dbReference>
<dbReference type="GO" id="GO:0006897">
    <property type="term" value="P:endocytosis"/>
    <property type="evidence" value="ECO:0000318"/>
    <property type="project" value="GO_Central"/>
</dbReference>
<dbReference type="GO" id="GO:0016197">
    <property type="term" value="P:endosomal transport"/>
    <property type="evidence" value="ECO:0000318"/>
    <property type="project" value="GO_Central"/>
</dbReference>
<dbReference type="CDD" id="cd00052">
    <property type="entry name" value="EH"/>
    <property type="match status" value="1"/>
</dbReference>
<dbReference type="Gene3D" id="1.10.238.10">
    <property type="entry name" value="EF-hand"/>
    <property type="match status" value="2"/>
</dbReference>
<dbReference type="InterPro" id="IPR011992">
    <property type="entry name" value="EF-hand-dom_pair"/>
</dbReference>
<dbReference type="InterPro" id="IPR002048">
    <property type="entry name" value="EF_hand_dom"/>
</dbReference>
<dbReference type="InterPro" id="IPR000261">
    <property type="entry name" value="EH_dom"/>
</dbReference>
<dbReference type="InterPro" id="IPR025604">
    <property type="entry name" value="End3"/>
</dbReference>
<dbReference type="PANTHER" id="PTHR11216:SF74">
    <property type="entry name" value="ACTIN CYTOSKELETON-REGULATORY COMPLEX PROTEIN END3"/>
    <property type="match status" value="1"/>
</dbReference>
<dbReference type="PANTHER" id="PTHR11216">
    <property type="entry name" value="EH DOMAIN"/>
    <property type="match status" value="1"/>
</dbReference>
<dbReference type="Pfam" id="PF12763">
    <property type="entry name" value="EH"/>
    <property type="match status" value="2"/>
</dbReference>
<dbReference type="Pfam" id="PF12761">
    <property type="entry name" value="End3"/>
    <property type="match status" value="1"/>
</dbReference>
<dbReference type="SMART" id="SM00027">
    <property type="entry name" value="EH"/>
    <property type="match status" value="2"/>
</dbReference>
<dbReference type="SUPFAM" id="SSF47473">
    <property type="entry name" value="EF-hand"/>
    <property type="match status" value="2"/>
</dbReference>
<dbReference type="PROSITE" id="PS50222">
    <property type="entry name" value="EF_HAND_2"/>
    <property type="match status" value="2"/>
</dbReference>
<dbReference type="PROSITE" id="PS50031">
    <property type="entry name" value="EH"/>
    <property type="match status" value="2"/>
</dbReference>
<accession>Q9USZ7</accession>
<protein>
    <recommendedName>
        <fullName>Actin cytoskeleton-regulatory complex protein end3</fullName>
    </recommendedName>
    <alternativeName>
        <fullName>Endocytosis protein 3</fullName>
    </alternativeName>
</protein>
<name>END3_SCHPO</name>
<proteinExistence type="inferred from homology"/>
<evidence type="ECO:0000250" key="1"/>
<evidence type="ECO:0000255" key="2"/>
<evidence type="ECO:0000255" key="3">
    <source>
        <dbReference type="PROSITE-ProRule" id="PRU00077"/>
    </source>
</evidence>
<evidence type="ECO:0000255" key="4">
    <source>
        <dbReference type="PROSITE-ProRule" id="PRU00448"/>
    </source>
</evidence>
<evidence type="ECO:0000256" key="5">
    <source>
        <dbReference type="SAM" id="MobiDB-lite"/>
    </source>
</evidence>
<evidence type="ECO:0000305" key="6"/>
<comment type="function">
    <text evidence="1">Component of the PAN1 actin cytoskeleton-regulatory complex required for the internalization of endosomes during actin-coupled endocytosis. The complex links the site of endocytosis to the cell membrane-associated actin cytoskeleton. Mediates uptake of external molecules and vacuolar degradation of plasma membrane proteins. Plays a role in the proper organization of the cell membrane-associated actin cytoskeleton and promotes its destabilization (By similarity).</text>
</comment>
<comment type="subunit">
    <text evidence="1">Component of the PAN1 actin cytoskeleton-regulatory complex.</text>
</comment>
<comment type="subcellular location">
    <subcellularLocation>
        <location evidence="1">Cell membrane</location>
        <topology evidence="1">Peripheral membrane protein</topology>
        <orientation evidence="1">Cytoplasmic side</orientation>
    </subcellularLocation>
    <subcellularLocation>
        <location evidence="1">Endosome membrane</location>
        <topology evidence="1">Peripheral membrane protein</topology>
        <orientation evidence="1">Cytoplasmic side</orientation>
    </subcellularLocation>
    <subcellularLocation>
        <location evidence="1">Cytoplasm</location>
        <location evidence="1">Cytoskeleton</location>
        <location evidence="1">Actin patch</location>
    </subcellularLocation>
    <text evidence="1">Cytoplasmic and cortical actin patches.</text>
</comment>
<comment type="similarity">
    <text evidence="6">Belongs to the END3 family.</text>
</comment>
<organism>
    <name type="scientific">Schizosaccharomyces pombe (strain 972 / ATCC 24843)</name>
    <name type="common">Fission yeast</name>
    <dbReference type="NCBI Taxonomy" id="284812"/>
    <lineage>
        <taxon>Eukaryota</taxon>
        <taxon>Fungi</taxon>
        <taxon>Dikarya</taxon>
        <taxon>Ascomycota</taxon>
        <taxon>Taphrinomycotina</taxon>
        <taxon>Schizosaccharomycetes</taxon>
        <taxon>Schizosaccharomycetales</taxon>
        <taxon>Schizosaccharomycetaceae</taxon>
        <taxon>Schizosaccharomyces</taxon>
    </lineage>
</organism>